<protein>
    <recommendedName>
        <fullName evidence="1">Inositol 2-dehydrogenase</fullName>
        <ecNumber evidence="1">1.1.1.18</ecNumber>
    </recommendedName>
    <alternativeName>
        <fullName evidence="1">Myo-inositol 2-dehydrogenase</fullName>
        <shortName evidence="1">MI 2-dehydrogenase</shortName>
    </alternativeName>
</protein>
<sequence length="337" mass="36704">MTLNIGVIGTGAIGRDHIRRCSKVLQGSRIVAVNDINRDNAAKVVSDLKLDAKVYDNGHDLVKAADVQAVLVTSWGPSHEEFVLAAIAAGKPVFCEKPLAVTAQGCKNIVEAEAKHGKRLVQVGFMRPYDQGYRALKQVLTSGQIGEPLMLHCAHRNPTVGEAYTTDMAITDTLIHEIDVLRWLLDDDYVSVQVVFPRKSAKAFPHLKDPQIVLFETAKGTRIDVEIFVNCQYGYDIQCEVVGETGIAKLPEPSSVQMRSGAKLSTEILTDWKDRFIDAYDVELQGFINDVLAGKLTGPSAWDGYAAAVTADACVAAQLSGEIVPVTLPPRPAFYNK</sequence>
<keyword id="KW-0520">NAD</keyword>
<keyword id="KW-0560">Oxidoreductase</keyword>
<name>IOLG_SERP5</name>
<reference key="1">
    <citation type="submission" date="2007-09" db="EMBL/GenBank/DDBJ databases">
        <title>Complete sequence of chromosome of Serratia proteamaculans 568.</title>
        <authorList>
            <consortium name="US DOE Joint Genome Institute"/>
            <person name="Copeland A."/>
            <person name="Lucas S."/>
            <person name="Lapidus A."/>
            <person name="Barry K."/>
            <person name="Glavina del Rio T."/>
            <person name="Dalin E."/>
            <person name="Tice H."/>
            <person name="Pitluck S."/>
            <person name="Chain P."/>
            <person name="Malfatti S."/>
            <person name="Shin M."/>
            <person name="Vergez L."/>
            <person name="Schmutz J."/>
            <person name="Larimer F."/>
            <person name="Land M."/>
            <person name="Hauser L."/>
            <person name="Kyrpides N."/>
            <person name="Kim E."/>
            <person name="Taghavi S."/>
            <person name="Newman L."/>
            <person name="Vangronsveld J."/>
            <person name="van der Lelie D."/>
            <person name="Richardson P."/>
        </authorList>
    </citation>
    <scope>NUCLEOTIDE SEQUENCE [LARGE SCALE GENOMIC DNA]</scope>
    <source>
        <strain>568</strain>
    </source>
</reference>
<gene>
    <name evidence="1" type="primary">iolG</name>
    <name type="ordered locus">Spro_4658</name>
</gene>
<accession>A8GKW1</accession>
<feature type="chain" id="PRO_0000352596" description="Inositol 2-dehydrogenase">
    <location>
        <begin position="1"/>
        <end position="337"/>
    </location>
</feature>
<dbReference type="EC" id="1.1.1.18" evidence="1"/>
<dbReference type="EMBL" id="CP000826">
    <property type="protein sequence ID" value="ABV43751.1"/>
    <property type="molecule type" value="Genomic_DNA"/>
</dbReference>
<dbReference type="SMR" id="A8GKW1"/>
<dbReference type="STRING" id="399741.Spro_4658"/>
<dbReference type="KEGG" id="spe:Spro_4658"/>
<dbReference type="eggNOG" id="COG0673">
    <property type="taxonomic scope" value="Bacteria"/>
</dbReference>
<dbReference type="HOGENOM" id="CLU_023194_0_1_6"/>
<dbReference type="OrthoDB" id="9801953at2"/>
<dbReference type="GO" id="GO:0050112">
    <property type="term" value="F:inositol 2-dehydrogenase (NAD+) activity"/>
    <property type="evidence" value="ECO:0007669"/>
    <property type="project" value="UniProtKB-UniRule"/>
</dbReference>
<dbReference type="GO" id="GO:0000166">
    <property type="term" value="F:nucleotide binding"/>
    <property type="evidence" value="ECO:0007669"/>
    <property type="project" value="InterPro"/>
</dbReference>
<dbReference type="GO" id="GO:0019310">
    <property type="term" value="P:inositol catabolic process"/>
    <property type="evidence" value="ECO:0007669"/>
    <property type="project" value="UniProtKB-UniRule"/>
</dbReference>
<dbReference type="Gene3D" id="3.30.360.10">
    <property type="entry name" value="Dihydrodipicolinate Reductase, domain 2"/>
    <property type="match status" value="1"/>
</dbReference>
<dbReference type="Gene3D" id="3.40.50.720">
    <property type="entry name" value="NAD(P)-binding Rossmann-like Domain"/>
    <property type="match status" value="1"/>
</dbReference>
<dbReference type="HAMAP" id="MF_01671">
    <property type="entry name" value="IolG"/>
    <property type="match status" value="1"/>
</dbReference>
<dbReference type="InterPro" id="IPR050424">
    <property type="entry name" value="Gfo-Idh-MocA_inositol_DH"/>
</dbReference>
<dbReference type="InterPro" id="IPR004104">
    <property type="entry name" value="Gfo/Idh/MocA-like_OxRdtase_C"/>
</dbReference>
<dbReference type="InterPro" id="IPR000683">
    <property type="entry name" value="Gfo/Idh/MocA-like_OxRdtase_N"/>
</dbReference>
<dbReference type="InterPro" id="IPR023794">
    <property type="entry name" value="MI/DCI_dehydrogenase"/>
</dbReference>
<dbReference type="InterPro" id="IPR036291">
    <property type="entry name" value="NAD(P)-bd_dom_sf"/>
</dbReference>
<dbReference type="PANTHER" id="PTHR43593">
    <property type="match status" value="1"/>
</dbReference>
<dbReference type="PANTHER" id="PTHR43593:SF1">
    <property type="entry name" value="INOSITOL 2-DEHYDROGENASE"/>
    <property type="match status" value="1"/>
</dbReference>
<dbReference type="Pfam" id="PF01408">
    <property type="entry name" value="GFO_IDH_MocA"/>
    <property type="match status" value="1"/>
</dbReference>
<dbReference type="Pfam" id="PF02894">
    <property type="entry name" value="GFO_IDH_MocA_C"/>
    <property type="match status" value="1"/>
</dbReference>
<dbReference type="SUPFAM" id="SSF55347">
    <property type="entry name" value="Glyceraldehyde-3-phosphate dehydrogenase-like, C-terminal domain"/>
    <property type="match status" value="1"/>
</dbReference>
<dbReference type="SUPFAM" id="SSF51735">
    <property type="entry name" value="NAD(P)-binding Rossmann-fold domains"/>
    <property type="match status" value="1"/>
</dbReference>
<proteinExistence type="inferred from homology"/>
<organism>
    <name type="scientific">Serratia proteamaculans (strain 568)</name>
    <dbReference type="NCBI Taxonomy" id="399741"/>
    <lineage>
        <taxon>Bacteria</taxon>
        <taxon>Pseudomonadati</taxon>
        <taxon>Pseudomonadota</taxon>
        <taxon>Gammaproteobacteria</taxon>
        <taxon>Enterobacterales</taxon>
        <taxon>Yersiniaceae</taxon>
        <taxon>Serratia</taxon>
    </lineage>
</organism>
<evidence type="ECO:0000255" key="1">
    <source>
        <dbReference type="HAMAP-Rule" id="MF_01671"/>
    </source>
</evidence>
<comment type="function">
    <text evidence="1">Involved in the oxidation of myo-inositol (MI) to 2-keto-myo-inositol (2KMI or 2-inosose).</text>
</comment>
<comment type="catalytic activity">
    <reaction evidence="1">
        <text>myo-inositol + NAD(+) = scyllo-inosose + NADH + H(+)</text>
        <dbReference type="Rhea" id="RHEA:16949"/>
        <dbReference type="ChEBI" id="CHEBI:15378"/>
        <dbReference type="ChEBI" id="CHEBI:17268"/>
        <dbReference type="ChEBI" id="CHEBI:17811"/>
        <dbReference type="ChEBI" id="CHEBI:57540"/>
        <dbReference type="ChEBI" id="CHEBI:57945"/>
        <dbReference type="EC" id="1.1.1.18"/>
    </reaction>
</comment>
<comment type="subunit">
    <text evidence="1">Homotetramer.</text>
</comment>
<comment type="similarity">
    <text evidence="1">Belongs to the Gfo/Idh/MocA family.</text>
</comment>